<name>PGK_ECOL6</name>
<accession>P0A7A0</accession>
<accession>P11665</accession>
<comment type="catalytic activity">
    <reaction>
        <text>(2R)-3-phosphoglycerate + ATP = (2R)-3-phospho-glyceroyl phosphate + ADP</text>
        <dbReference type="Rhea" id="RHEA:14801"/>
        <dbReference type="ChEBI" id="CHEBI:30616"/>
        <dbReference type="ChEBI" id="CHEBI:57604"/>
        <dbReference type="ChEBI" id="CHEBI:58272"/>
        <dbReference type="ChEBI" id="CHEBI:456216"/>
        <dbReference type="EC" id="2.7.2.3"/>
    </reaction>
</comment>
<comment type="pathway">
    <text>Carbohydrate degradation; glycolysis; pyruvate from D-glyceraldehyde 3-phosphate: step 2/5.</text>
</comment>
<comment type="subunit">
    <text evidence="1">Monomer.</text>
</comment>
<comment type="subcellular location">
    <subcellularLocation>
        <location evidence="2">Cytoplasm</location>
    </subcellularLocation>
</comment>
<comment type="similarity">
    <text evidence="2">Belongs to the phosphoglycerate kinase family.</text>
</comment>
<comment type="sequence caution" evidence="2">
    <conflict type="erroneous initiation">
        <sequence resource="EMBL-CDS" id="AAN81952"/>
    </conflict>
</comment>
<gene>
    <name type="primary">pgk</name>
    <name type="ordered locus">c3504</name>
</gene>
<protein>
    <recommendedName>
        <fullName>Phosphoglycerate kinase</fullName>
        <ecNumber>2.7.2.3</ecNumber>
    </recommendedName>
</protein>
<organism>
    <name type="scientific">Escherichia coli O6:H1 (strain CFT073 / ATCC 700928 / UPEC)</name>
    <dbReference type="NCBI Taxonomy" id="199310"/>
    <lineage>
        <taxon>Bacteria</taxon>
        <taxon>Pseudomonadati</taxon>
        <taxon>Pseudomonadota</taxon>
        <taxon>Gammaproteobacteria</taxon>
        <taxon>Enterobacterales</taxon>
        <taxon>Enterobacteriaceae</taxon>
        <taxon>Escherichia</taxon>
    </lineage>
</organism>
<proteinExistence type="inferred from homology"/>
<sequence length="387" mass="41118">MSVIKMTDLDLAGKRVFIRADLNVPVKDGKVTSDARIRASLPTIELALKQGAKVMVTSHLGRPTEGEYNEEFSLLPVVNYLKDKLSNPVRLVKDYLDGVDVAEGELVVLENVRFNKGEKKDDETLSKKYAALCDVFVMDAFGTAHRAQASTHGIGKFADVACAGPLLAAELDALGKALKEPARPMVAIVGGSKVSTKLTVLDSLSKIADQLIVGGGIANTFIAAQGHDVGKSLYEADLVDEAKRLLTTCNIPVPSDVRVATEFSETAPATLKSVNDVKADEQILDIGDASAQELAEILKNAKTILWNGPVGVFEFPNFRKGTEIVANAIADSEAFSIAGGGDTLAAIDLFGIADKISYISTGGGAFLEFVEGKVLPAVAMLEERAKK</sequence>
<reference key="1">
    <citation type="journal article" date="2002" name="Proc. Natl. Acad. Sci. U.S.A.">
        <title>Extensive mosaic structure revealed by the complete genome sequence of uropathogenic Escherichia coli.</title>
        <authorList>
            <person name="Welch R.A."/>
            <person name="Burland V."/>
            <person name="Plunkett G. III"/>
            <person name="Redford P."/>
            <person name="Roesch P."/>
            <person name="Rasko D."/>
            <person name="Buckles E.L."/>
            <person name="Liou S.-R."/>
            <person name="Boutin A."/>
            <person name="Hackett J."/>
            <person name="Stroud D."/>
            <person name="Mayhew G.F."/>
            <person name="Rose D.J."/>
            <person name="Zhou S."/>
            <person name="Schwartz D.C."/>
            <person name="Perna N.T."/>
            <person name="Mobley H.L.T."/>
            <person name="Donnenberg M.S."/>
            <person name="Blattner F.R."/>
        </authorList>
    </citation>
    <scope>NUCLEOTIDE SEQUENCE [LARGE SCALE GENOMIC DNA]</scope>
    <source>
        <strain>CFT073 / ATCC 700928 / UPEC</strain>
    </source>
</reference>
<keyword id="KW-0007">Acetylation</keyword>
<keyword id="KW-0067">ATP-binding</keyword>
<keyword id="KW-0963">Cytoplasm</keyword>
<keyword id="KW-0324">Glycolysis</keyword>
<keyword id="KW-0418">Kinase</keyword>
<keyword id="KW-0547">Nucleotide-binding</keyword>
<keyword id="KW-1185">Reference proteome</keyword>
<keyword id="KW-0808">Transferase</keyword>
<feature type="initiator methionine" description="Removed" evidence="1">
    <location>
        <position position="1"/>
    </location>
</feature>
<feature type="chain" id="PRO_0000145942" description="Phosphoglycerate kinase">
    <location>
        <begin position="2"/>
        <end position="387"/>
    </location>
</feature>
<feature type="binding site" evidence="1">
    <location>
        <begin position="21"/>
        <end position="23"/>
    </location>
    <ligand>
        <name>substrate</name>
    </ligand>
</feature>
<feature type="binding site" evidence="1">
    <location>
        <position position="36"/>
    </location>
    <ligand>
        <name>substrate</name>
    </ligand>
</feature>
<feature type="binding site" evidence="1">
    <location>
        <begin position="59"/>
        <end position="62"/>
    </location>
    <ligand>
        <name>substrate</name>
    </ligand>
</feature>
<feature type="binding site" evidence="1">
    <location>
        <position position="113"/>
    </location>
    <ligand>
        <name>substrate</name>
    </ligand>
</feature>
<feature type="binding site" evidence="1">
    <location>
        <position position="146"/>
    </location>
    <ligand>
        <name>substrate</name>
    </ligand>
</feature>
<feature type="binding site" evidence="1">
    <location>
        <position position="197"/>
    </location>
    <ligand>
        <name>ATP</name>
        <dbReference type="ChEBI" id="CHEBI:30616"/>
    </ligand>
</feature>
<feature type="binding site" evidence="1">
    <location>
        <position position="314"/>
    </location>
    <ligand>
        <name>ATP</name>
        <dbReference type="ChEBI" id="CHEBI:30616"/>
    </ligand>
</feature>
<feature type="binding site" evidence="1">
    <location>
        <begin position="340"/>
        <end position="343"/>
    </location>
    <ligand>
        <name>ATP</name>
        <dbReference type="ChEBI" id="CHEBI:30616"/>
    </ligand>
</feature>
<feature type="modified residue" description="N6-acetyllysine" evidence="1">
    <location>
        <position position="84"/>
    </location>
</feature>
<evidence type="ECO:0000250" key="1"/>
<evidence type="ECO:0000305" key="2"/>
<dbReference type="EC" id="2.7.2.3"/>
<dbReference type="EMBL" id="AE014075">
    <property type="protein sequence ID" value="AAN81952.1"/>
    <property type="status" value="ALT_INIT"/>
    <property type="molecule type" value="Genomic_DNA"/>
</dbReference>
<dbReference type="RefSeq" id="WP_000111269.1">
    <property type="nucleotide sequence ID" value="NZ_CP051263.1"/>
</dbReference>
<dbReference type="SMR" id="P0A7A0"/>
<dbReference type="STRING" id="199310.c3504"/>
<dbReference type="GeneID" id="89517738"/>
<dbReference type="KEGG" id="ecc:c3504"/>
<dbReference type="eggNOG" id="COG0126">
    <property type="taxonomic scope" value="Bacteria"/>
</dbReference>
<dbReference type="HOGENOM" id="CLU_025427_0_2_6"/>
<dbReference type="UniPathway" id="UPA00109">
    <property type="reaction ID" value="UER00185"/>
</dbReference>
<dbReference type="Proteomes" id="UP000001410">
    <property type="component" value="Chromosome"/>
</dbReference>
<dbReference type="GO" id="GO:0005829">
    <property type="term" value="C:cytosol"/>
    <property type="evidence" value="ECO:0007669"/>
    <property type="project" value="TreeGrafter"/>
</dbReference>
<dbReference type="GO" id="GO:0043531">
    <property type="term" value="F:ADP binding"/>
    <property type="evidence" value="ECO:0007669"/>
    <property type="project" value="TreeGrafter"/>
</dbReference>
<dbReference type="GO" id="GO:0005524">
    <property type="term" value="F:ATP binding"/>
    <property type="evidence" value="ECO:0007669"/>
    <property type="project" value="UniProtKB-KW"/>
</dbReference>
<dbReference type="GO" id="GO:0004618">
    <property type="term" value="F:phosphoglycerate kinase activity"/>
    <property type="evidence" value="ECO:0007669"/>
    <property type="project" value="UniProtKB-UniRule"/>
</dbReference>
<dbReference type="GO" id="GO:0006094">
    <property type="term" value="P:gluconeogenesis"/>
    <property type="evidence" value="ECO:0007669"/>
    <property type="project" value="TreeGrafter"/>
</dbReference>
<dbReference type="GO" id="GO:0006096">
    <property type="term" value="P:glycolytic process"/>
    <property type="evidence" value="ECO:0007669"/>
    <property type="project" value="UniProtKB-UniRule"/>
</dbReference>
<dbReference type="CDD" id="cd00318">
    <property type="entry name" value="Phosphoglycerate_kinase"/>
    <property type="match status" value="1"/>
</dbReference>
<dbReference type="FunFam" id="3.40.50.1260:FF:000001">
    <property type="entry name" value="Phosphoglycerate kinase"/>
    <property type="match status" value="1"/>
</dbReference>
<dbReference type="FunFam" id="3.40.50.1260:FF:000002">
    <property type="entry name" value="Phosphoglycerate kinase"/>
    <property type="match status" value="1"/>
</dbReference>
<dbReference type="Gene3D" id="3.40.50.1260">
    <property type="entry name" value="Phosphoglycerate kinase, N-terminal domain"/>
    <property type="match status" value="2"/>
</dbReference>
<dbReference type="HAMAP" id="MF_00145">
    <property type="entry name" value="Phosphoglyc_kinase"/>
    <property type="match status" value="1"/>
</dbReference>
<dbReference type="InterPro" id="IPR001576">
    <property type="entry name" value="Phosphoglycerate_kinase"/>
</dbReference>
<dbReference type="InterPro" id="IPR015911">
    <property type="entry name" value="Phosphoglycerate_kinase_CS"/>
</dbReference>
<dbReference type="InterPro" id="IPR015824">
    <property type="entry name" value="Phosphoglycerate_kinase_N"/>
</dbReference>
<dbReference type="InterPro" id="IPR036043">
    <property type="entry name" value="Phosphoglycerate_kinase_sf"/>
</dbReference>
<dbReference type="PANTHER" id="PTHR11406">
    <property type="entry name" value="PHOSPHOGLYCERATE KINASE"/>
    <property type="match status" value="1"/>
</dbReference>
<dbReference type="PANTHER" id="PTHR11406:SF23">
    <property type="entry name" value="PHOSPHOGLYCERATE KINASE 1, CHLOROPLASTIC-RELATED"/>
    <property type="match status" value="1"/>
</dbReference>
<dbReference type="Pfam" id="PF00162">
    <property type="entry name" value="PGK"/>
    <property type="match status" value="1"/>
</dbReference>
<dbReference type="PIRSF" id="PIRSF000724">
    <property type="entry name" value="Pgk"/>
    <property type="match status" value="1"/>
</dbReference>
<dbReference type="PRINTS" id="PR00477">
    <property type="entry name" value="PHGLYCKINASE"/>
</dbReference>
<dbReference type="SUPFAM" id="SSF53748">
    <property type="entry name" value="Phosphoglycerate kinase"/>
    <property type="match status" value="1"/>
</dbReference>
<dbReference type="PROSITE" id="PS00111">
    <property type="entry name" value="PGLYCERATE_KINASE"/>
    <property type="match status" value="1"/>
</dbReference>